<proteinExistence type="evidence at protein level"/>
<protein>
    <recommendedName>
        <fullName>Glycodelin</fullName>
        <shortName>GD</shortName>
    </recommendedName>
    <alternativeName>
        <fullName evidence="15 17">Placental protein 14</fullName>
        <shortName>PP14</shortName>
    </alternativeName>
    <alternativeName>
        <fullName evidence="16">Pregnancy-associated endometrial alpha-2 globulin</fullName>
        <shortName>PAEG</shortName>
        <shortName>PEG</shortName>
    </alternativeName>
    <alternativeName>
        <fullName>Progestagen-associated endometrial protein</fullName>
    </alternativeName>
    <alternativeName>
        <fullName>Progesterone-associated endometrial protein</fullName>
    </alternativeName>
    <alternativeName>
        <fullName evidence="14">Zona-binding inhibitory factor-1</fullName>
        <shortName evidence="14">ZIF-1</shortName>
    </alternativeName>
</protein>
<evidence type="ECO:0000269" key="1">
    <source>
    </source>
</evidence>
<evidence type="ECO:0000269" key="2">
    <source>
    </source>
</evidence>
<evidence type="ECO:0000269" key="3">
    <source>
    </source>
</evidence>
<evidence type="ECO:0000269" key="4">
    <source>
    </source>
</evidence>
<evidence type="ECO:0000269" key="5">
    <source>
    </source>
</evidence>
<evidence type="ECO:0000269" key="6">
    <source>
    </source>
</evidence>
<evidence type="ECO:0000269" key="7">
    <source>
    </source>
</evidence>
<evidence type="ECO:0000269" key="8">
    <source>
    </source>
</evidence>
<evidence type="ECO:0000269" key="9">
    <source>
    </source>
</evidence>
<evidence type="ECO:0000269" key="10">
    <source>
    </source>
</evidence>
<evidence type="ECO:0000269" key="11">
    <source>
    </source>
</evidence>
<evidence type="ECO:0000269" key="12">
    <source>
    </source>
</evidence>
<evidence type="ECO:0000269" key="13">
    <source>
    </source>
</evidence>
<evidence type="ECO:0000303" key="14">
    <source>
    </source>
</evidence>
<evidence type="ECO:0000303" key="15">
    <source>
    </source>
</evidence>
<evidence type="ECO:0000303" key="16">
    <source>
    </source>
</evidence>
<evidence type="ECO:0000303" key="17">
    <source>
    </source>
</evidence>
<evidence type="ECO:0000305" key="18"/>
<evidence type="ECO:0007744" key="19">
    <source>
        <dbReference type="PDB" id="4R0B"/>
    </source>
</evidence>
<evidence type="ECO:0007829" key="20">
    <source>
        <dbReference type="PDB" id="4R0B"/>
    </source>
</evidence>
<accession>P09466</accession>
<accession>Q5T6T1</accession>
<accession>Q9UG92</accession>
<dbReference type="EMBL" id="J04129">
    <property type="protein sequence ID" value="AAA60147.1"/>
    <property type="status" value="ALT_INIT"/>
    <property type="molecule type" value="mRNA"/>
</dbReference>
<dbReference type="EMBL" id="M34046">
    <property type="protein sequence ID" value="AAA60148.1"/>
    <property type="molecule type" value="Genomic_DNA"/>
</dbReference>
<dbReference type="EMBL" id="M61886">
    <property type="protein sequence ID" value="AAA35801.1"/>
    <property type="molecule type" value="mRNA"/>
</dbReference>
<dbReference type="EMBL" id="M61886">
    <property type="protein sequence ID" value="AAA35802.1"/>
    <property type="molecule type" value="mRNA"/>
</dbReference>
<dbReference type="EMBL" id="AL050169">
    <property type="protein sequence ID" value="CAB43305.1"/>
    <property type="status" value="ALT_INIT"/>
    <property type="molecule type" value="mRNA"/>
</dbReference>
<dbReference type="EMBL" id="AL354761">
    <property type="status" value="NOT_ANNOTATED_CDS"/>
    <property type="molecule type" value="Genomic_DNA"/>
</dbReference>
<dbReference type="EMBL" id="BC069451">
    <property type="protein sequence ID" value="AAH69451.1"/>
    <property type="molecule type" value="mRNA"/>
</dbReference>
<dbReference type="EMBL" id="BC069562">
    <property type="protein sequence ID" value="AAH69562.1"/>
    <property type="molecule type" value="mRNA"/>
</dbReference>
<dbReference type="EMBL" id="BC112304">
    <property type="protein sequence ID" value="AAI12305.1"/>
    <property type="molecule type" value="mRNA"/>
</dbReference>
<dbReference type="EMBL" id="BC113728">
    <property type="protein sequence ID" value="AAI13729.1"/>
    <property type="molecule type" value="mRNA"/>
</dbReference>
<dbReference type="CCDS" id="CCDS35173.1">
    <molecule id="P09466-1"/>
</dbReference>
<dbReference type="PIR" id="A35570">
    <property type="entry name" value="A39167"/>
</dbReference>
<dbReference type="RefSeq" id="NP_001018058.1">
    <molecule id="P09466-2"/>
    <property type="nucleotide sequence ID" value="NM_001018048.2"/>
</dbReference>
<dbReference type="RefSeq" id="NP_001018059.1">
    <molecule id="P09466-1"/>
    <property type="nucleotide sequence ID" value="NM_001018049.3"/>
</dbReference>
<dbReference type="RefSeq" id="NP_002562.2">
    <molecule id="P09466-1"/>
    <property type="nucleotide sequence ID" value="NM_002571.4"/>
</dbReference>
<dbReference type="RefSeq" id="XP_011517051.1">
    <molecule id="P09466-1"/>
    <property type="nucleotide sequence ID" value="XM_011518749.2"/>
</dbReference>
<dbReference type="RefSeq" id="XP_011517053.1">
    <molecule id="P09466-2"/>
    <property type="nucleotide sequence ID" value="XM_011518751.2"/>
</dbReference>
<dbReference type="PDB" id="4R0B">
    <property type="method" value="X-ray"/>
    <property type="resolution" value="2.45 A"/>
    <property type="chains" value="A=20-180"/>
</dbReference>
<dbReference type="PDBsum" id="4R0B"/>
<dbReference type="SMR" id="P09466"/>
<dbReference type="BioGRID" id="111084">
    <property type="interactions" value="73"/>
</dbReference>
<dbReference type="FunCoup" id="P09466">
    <property type="interactions" value="126"/>
</dbReference>
<dbReference type="IntAct" id="P09466">
    <property type="interactions" value="61"/>
</dbReference>
<dbReference type="MINT" id="P09466"/>
<dbReference type="STRING" id="9606.ENSP00000417898"/>
<dbReference type="DrugBank" id="DB02405">
    <property type="generic name" value="12-Bromododecanoic Acid"/>
</dbReference>
<dbReference type="DrugBank" id="DB09462">
    <property type="generic name" value="Glycerin"/>
</dbReference>
<dbReference type="DrugBank" id="DB03796">
    <property type="generic name" value="Palmitic Acid"/>
</dbReference>
<dbReference type="GlyConnect" id="177">
    <property type="glycosylation" value="20 N-Linked glycans (2 sites)"/>
</dbReference>
<dbReference type="GlyCosmos" id="P09466">
    <property type="glycosylation" value="3 sites, 41 glycans"/>
</dbReference>
<dbReference type="GlyGen" id="P09466">
    <property type="glycosylation" value="4 sites, 42 N-linked glycans (3 sites)"/>
</dbReference>
<dbReference type="iPTMnet" id="P09466"/>
<dbReference type="PhosphoSitePlus" id="P09466"/>
<dbReference type="BioMuta" id="PAEP"/>
<dbReference type="DMDM" id="130701"/>
<dbReference type="jPOST" id="P09466"/>
<dbReference type="MassIVE" id="P09466"/>
<dbReference type="PaxDb" id="9606-ENSP00000417898"/>
<dbReference type="PeptideAtlas" id="P09466"/>
<dbReference type="ProteomicsDB" id="52220">
    <molecule id="P09466-1"/>
</dbReference>
<dbReference type="ProteomicsDB" id="52221">
    <molecule id="P09466-2"/>
</dbReference>
<dbReference type="ProteomicsDB" id="52222">
    <molecule id="P09466-3"/>
</dbReference>
<dbReference type="Antibodypedia" id="3391">
    <property type="antibodies" value="379 antibodies from 31 providers"/>
</dbReference>
<dbReference type="DNASU" id="5047"/>
<dbReference type="Ensembl" id="ENST00000277508.9">
    <molecule id="P09466-1"/>
    <property type="protein sequence ID" value="ENSP00000277508.5"/>
    <property type="gene ID" value="ENSG00000122133.17"/>
</dbReference>
<dbReference type="Ensembl" id="ENST00000371766.6">
    <molecule id="P09466-1"/>
    <property type="protein sequence ID" value="ENSP00000360831.1"/>
    <property type="gene ID" value="ENSG00000122133.17"/>
</dbReference>
<dbReference type="Ensembl" id="ENST00000479141.6">
    <molecule id="P09466-1"/>
    <property type="protein sequence ID" value="ENSP00000417898.1"/>
    <property type="gene ID" value="ENSG00000122133.17"/>
</dbReference>
<dbReference type="GeneID" id="5047"/>
<dbReference type="KEGG" id="hsa:5047"/>
<dbReference type="MANE-Select" id="ENST00000479141.6">
    <property type="protein sequence ID" value="ENSP00000417898.1"/>
    <property type="RefSeq nucleotide sequence ID" value="NM_002571.4"/>
    <property type="RefSeq protein sequence ID" value="NP_002562.2"/>
</dbReference>
<dbReference type="UCSC" id="uc004cgd.2">
    <molecule id="P09466-1"/>
    <property type="organism name" value="human"/>
</dbReference>
<dbReference type="AGR" id="HGNC:8573"/>
<dbReference type="CTD" id="5047"/>
<dbReference type="DisGeNET" id="5047"/>
<dbReference type="GeneCards" id="PAEP"/>
<dbReference type="HGNC" id="HGNC:8573">
    <property type="gene designation" value="PAEP"/>
</dbReference>
<dbReference type="HPA" id="ENSG00000122133">
    <property type="expression patterns" value="Tissue enhanced (cervix, endometrium)"/>
</dbReference>
<dbReference type="MalaCards" id="PAEP"/>
<dbReference type="MIM" id="173310">
    <property type="type" value="gene"/>
</dbReference>
<dbReference type="neXtProt" id="NX_P09466"/>
<dbReference type="OpenTargets" id="ENSG00000122133"/>
<dbReference type="PharmGKB" id="PA32904"/>
<dbReference type="VEuPathDB" id="HostDB:ENSG00000122133"/>
<dbReference type="eggNOG" id="ENOG502T0EI">
    <property type="taxonomic scope" value="Eukaryota"/>
</dbReference>
<dbReference type="GeneTree" id="ENSGT01050000244868"/>
<dbReference type="InParanoid" id="P09466"/>
<dbReference type="OMA" id="NYMAVNE"/>
<dbReference type="OrthoDB" id="9835883at2759"/>
<dbReference type="PAN-GO" id="P09466">
    <property type="GO annotations" value="1 GO annotation based on evolutionary models"/>
</dbReference>
<dbReference type="PhylomeDB" id="P09466"/>
<dbReference type="TreeFam" id="TF342475"/>
<dbReference type="PathwayCommons" id="P09466"/>
<dbReference type="SignaLink" id="P09466"/>
<dbReference type="BioGRID-ORCS" id="5047">
    <property type="hits" value="14 hits in 1145 CRISPR screens"/>
</dbReference>
<dbReference type="ChiTaRS" id="PAEP">
    <property type="organism name" value="human"/>
</dbReference>
<dbReference type="EvolutionaryTrace" id="P09466"/>
<dbReference type="GeneWiki" id="PAEP"/>
<dbReference type="GenomeRNAi" id="5047"/>
<dbReference type="Pharos" id="P09466">
    <property type="development level" value="Tbio"/>
</dbReference>
<dbReference type="PRO" id="PR:P09466"/>
<dbReference type="Proteomes" id="UP000005640">
    <property type="component" value="Chromosome 9"/>
</dbReference>
<dbReference type="RNAct" id="P09466">
    <property type="molecule type" value="protein"/>
</dbReference>
<dbReference type="Bgee" id="ENSG00000122133">
    <property type="expression patterns" value="Expressed in decidua and 94 other cell types or tissues"/>
</dbReference>
<dbReference type="ExpressionAtlas" id="P09466">
    <property type="expression patterns" value="baseline and differential"/>
</dbReference>
<dbReference type="GO" id="GO:0005576">
    <property type="term" value="C:extracellular region"/>
    <property type="evidence" value="ECO:0000314"/>
    <property type="project" value="UniProtKB"/>
</dbReference>
<dbReference type="GO" id="GO:0036094">
    <property type="term" value="F:small molecule binding"/>
    <property type="evidence" value="ECO:0007669"/>
    <property type="project" value="InterPro"/>
</dbReference>
<dbReference type="GO" id="GO:0006915">
    <property type="term" value="P:apoptotic process"/>
    <property type="evidence" value="ECO:0000314"/>
    <property type="project" value="CACAO"/>
</dbReference>
<dbReference type="GO" id="GO:1902491">
    <property type="term" value="P:negative regulation of sperm capacitation"/>
    <property type="evidence" value="ECO:0000315"/>
    <property type="project" value="UniProtKB"/>
</dbReference>
<dbReference type="GO" id="GO:0032725">
    <property type="term" value="P:positive regulation of granulocyte macrophage colony-stimulating factor production"/>
    <property type="evidence" value="ECO:0000314"/>
    <property type="project" value="CACAO"/>
</dbReference>
<dbReference type="GO" id="GO:2000359">
    <property type="term" value="P:regulation of binding of sperm to zona pellucida"/>
    <property type="evidence" value="ECO:0000314"/>
    <property type="project" value="UniProtKB"/>
</dbReference>
<dbReference type="CDD" id="cd19416">
    <property type="entry name" value="lipocalin_beta-LG-like"/>
    <property type="match status" value="1"/>
</dbReference>
<dbReference type="FunFam" id="2.40.128.20:FF:000033">
    <property type="entry name" value="PAEP isoform 1"/>
    <property type="match status" value="1"/>
</dbReference>
<dbReference type="Gene3D" id="2.40.128.20">
    <property type="match status" value="1"/>
</dbReference>
<dbReference type="InterPro" id="IPR002447">
    <property type="entry name" value="Blactoglobulin"/>
</dbReference>
<dbReference type="InterPro" id="IPR012674">
    <property type="entry name" value="Calycin"/>
</dbReference>
<dbReference type="InterPro" id="IPR002345">
    <property type="entry name" value="Lipocalin"/>
</dbReference>
<dbReference type="InterPro" id="IPR022272">
    <property type="entry name" value="Lipocalin_CS"/>
</dbReference>
<dbReference type="InterPro" id="IPR000566">
    <property type="entry name" value="Lipocln_cytosolic_FA-bd_dom"/>
</dbReference>
<dbReference type="PANTHER" id="PTHR11430:SF117">
    <property type="entry name" value="GLYCODELIN"/>
    <property type="match status" value="1"/>
</dbReference>
<dbReference type="PANTHER" id="PTHR11430">
    <property type="entry name" value="LIPOCALIN"/>
    <property type="match status" value="1"/>
</dbReference>
<dbReference type="Pfam" id="PF00061">
    <property type="entry name" value="Lipocalin"/>
    <property type="match status" value="1"/>
</dbReference>
<dbReference type="PRINTS" id="PR01172">
    <property type="entry name" value="BLCTOGLOBULN"/>
</dbReference>
<dbReference type="PRINTS" id="PR00179">
    <property type="entry name" value="LIPOCALIN"/>
</dbReference>
<dbReference type="SUPFAM" id="SSF50814">
    <property type="entry name" value="Lipocalins"/>
    <property type="match status" value="1"/>
</dbReference>
<dbReference type="PROSITE" id="PS00213">
    <property type="entry name" value="LIPOCALIN"/>
    <property type="match status" value="1"/>
</dbReference>
<comment type="function">
    <text evidence="2 3 4 9 13">Glycoprotein that regulates critical steps during fertilization and also has immunomonomodulatory effects. Four glycoforms, namely glycodelin-S, -A, -F and -C have been identified in reproductive tissues that differ in glycosylation and biological activity. Glycodelin-A has contraceptive and immunosuppressive activities (PubMed:7531163, PubMed:9918684). Glycodelin-C stimulates binding of spermatozoa to the zona pellucida (PubMed:17192260). Glycodelin-F inhibits spermatozoa-zona pellucida binding and significantly suppresses progesterone-induced acrosome reaction of spermatozoa (PubMed:12672671). Glycodelin-S in seminal plasma maintains the uncapacitated state of human spermatozoa (PubMed:15883155).</text>
</comment>
<comment type="subunit">
    <text evidence="5 12">Homodimer (PubMed:25422905, PubMed:9239694).</text>
</comment>
<comment type="interaction">
    <interactant intactId="EBI-465167">
        <id>P09466</id>
    </interactant>
    <interactant intactId="EBI-13059134">
        <id>Q13520</id>
        <label>AQP6</label>
    </interactant>
    <organismsDiffer>false</organismsDiffer>
    <experiments>3</experiments>
</comment>
<comment type="interaction">
    <interactant intactId="EBI-465167">
        <id>P09466</id>
    </interactant>
    <interactant intactId="EBI-17444777">
        <id>O43315</id>
        <label>AQP9</label>
    </interactant>
    <organismsDiffer>false</organismsDiffer>
    <experiments>3</experiments>
</comment>
<comment type="interaction">
    <interactant intactId="EBI-465167">
        <id>P09466</id>
    </interactant>
    <interactant intactId="EBI-11343438">
        <id>Q3SXY8</id>
        <label>ARL13B</label>
    </interactant>
    <organismsDiffer>false</organismsDiffer>
    <experiments>3</experiments>
</comment>
<comment type="interaction">
    <interactant intactId="EBI-465167">
        <id>P09466</id>
    </interactant>
    <interactant intactId="EBI-17973325">
        <id>P60508</id>
        <label>ERVFRD-1</label>
    </interactant>
    <organismsDiffer>false</organismsDiffer>
    <experiments>3</experiments>
</comment>
<comment type="interaction">
    <interactant intactId="EBI-465167">
        <id>P09466</id>
    </interactant>
    <interactant intactId="EBI-3917143">
        <id>Q5T7V8</id>
        <label>GORAB</label>
    </interactant>
    <organismsDiffer>false</organismsDiffer>
    <experiments>3</experiments>
</comment>
<comment type="interaction">
    <interactant intactId="EBI-465167">
        <id>P09466</id>
    </interactant>
    <interactant intactId="EBI-18076404">
        <id>O15529</id>
        <label>GPR42</label>
    </interactant>
    <organismsDiffer>false</organismsDiffer>
    <experiments>3</experiments>
</comment>
<comment type="interaction">
    <interactant intactId="EBI-465167">
        <id>P09466</id>
    </interactant>
    <interactant intactId="EBI-11721746">
        <id>Q8TED1</id>
        <label>GPX8</label>
    </interactant>
    <organismsDiffer>false</organismsDiffer>
    <experiments>3</experiments>
</comment>
<comment type="interaction">
    <interactant intactId="EBI-465167">
        <id>P09466</id>
    </interactant>
    <interactant intactId="EBI-2832937">
        <id>Q96HH9</id>
        <label>GRAMD2B</label>
    </interactant>
    <organismsDiffer>false</organismsDiffer>
    <experiments>8</experiments>
</comment>
<comment type="interaction">
    <interactant intactId="EBI-465167">
        <id>P09466</id>
    </interactant>
    <interactant intactId="EBI-11427100">
        <id>P31937</id>
        <label>HIBADH</label>
    </interactant>
    <organismsDiffer>false</organismsDiffer>
    <experiments>3</experiments>
</comment>
<comment type="interaction">
    <interactant intactId="EBI-465167">
        <id>P09466</id>
    </interactant>
    <interactant intactId="EBI-373215">
        <id>Q8IU57</id>
        <label>IFNLR1</label>
    </interactant>
    <organismsDiffer>false</organismsDiffer>
    <experiments>3</experiments>
</comment>
<comment type="interaction">
    <interactant intactId="EBI-465167">
        <id>P09466</id>
    </interactant>
    <interactant intactId="EBI-12956949">
        <id>Q9Y5G9</id>
        <label>PCDHGA4</label>
    </interactant>
    <organismsDiffer>false</organismsDiffer>
    <experiments>3</experiments>
</comment>
<comment type="interaction">
    <interactant intactId="EBI-465167">
        <id>P09466</id>
    </interactant>
    <interactant intactId="EBI-6447886">
        <id>Q9Y320</id>
        <label>TMX2</label>
    </interactant>
    <organismsDiffer>false</organismsDiffer>
    <experiments>3</experiments>
</comment>
<comment type="subcellular location">
    <subcellularLocation>
        <location evidence="2 4 8">Secreted</location>
    </subcellularLocation>
</comment>
<comment type="alternative products">
    <event type="alternative splicing"/>
    <isoform>
        <id>P09466-1</id>
        <name>1</name>
        <sequence type="displayed"/>
    </isoform>
    <isoform>
        <id>P09466-2</id>
        <name>2</name>
        <sequence type="described" ref="VSP_003140"/>
    </isoform>
    <isoform>
        <id>P09466-3</id>
        <name>3</name>
        <sequence type="described" ref="VSP_003141"/>
    </isoform>
</comment>
<comment type="tissue specificity">
    <text evidence="2 4 6 8 12">This protein is, the main protein synthesized and secreted in the endometrium from mid-luteal phase of the menstrual cycle and during the first semester of pregnancy (PubMed:3667877). Glycodelin-A is expressed in amniotic fluid, endometrium/decidua and maternal serum (at protein level) (PubMed:3194393). Glycodelin-F is expressed in follicular fluid, luteinized granulosa cells and the oviduct (at protein level) (PubMed:12672671). Glycodelin-S is expressed in seminal plasma and seminal vesicles (at protein level) (PubMed:9239694). Glycodelin-C is detected in cumulus cells (at protein level), but cumulus cells do not synthesize Glycodelin-C but take up and convert glycodelin-A and -F vis glycan remodeling (PubMed:17192260).</text>
</comment>
<comment type="PTM">
    <text evidence="2 4 10 11">Four distinct glycoforms A, C, F and S arise from different N-linked oligosaccharide chains at amino acid residues Asn-46 and Asn-81. Glycodelin-A and -F are taken up by the cumulus cells in which partial deglycosylation takes place to produce glycodelin-C.</text>
</comment>
<comment type="similarity">
    <text evidence="18">Belongs to the calycin superfamily. Lipocalin family.</text>
</comment>
<comment type="sequence caution" evidence="18">
    <conflict type="erroneous initiation">
        <sequence resource="EMBL-CDS" id="AAA60147"/>
    </conflict>
</comment>
<comment type="sequence caution" evidence="18">
    <conflict type="erroneous initiation">
        <sequence resource="EMBL-CDS" id="CAB43305"/>
    </conflict>
</comment>
<comment type="online information" name="Atlas of Genetics and Cytogenetics in Oncology and Haematology">
    <link uri="https://atlasgeneticsoncology.org/gene/46067/PAEP"/>
</comment>
<gene>
    <name type="primary">PAEP</name>
</gene>
<sequence length="180" mass="20624">MLCLLLTLGVALVCGVPAMDIPQTKQDLELPKLAGTWHSMAMATNNISLMATLKAPLRVHITSLLPTPEDNLEIVLHRWENNSCVEKKVLGEKTENPKKFKINYTVANEATLLDTDYDNFLFLCLQDTTTPIQSMMCQYLARVLVEDDEIMQGFIRAFRPLPRHLWYLLDLKQMEEPCRF</sequence>
<keyword id="KW-0002">3D-structure</keyword>
<keyword id="KW-0025">Alternative splicing</keyword>
<keyword id="KW-0903">Direct protein sequencing</keyword>
<keyword id="KW-1015">Disulfide bond</keyword>
<keyword id="KW-0325">Glycoprotein</keyword>
<keyword id="KW-1267">Proteomics identification</keyword>
<keyword id="KW-1185">Reference proteome</keyword>
<keyword id="KW-0964">Secreted</keyword>
<keyword id="KW-0732">Signal</keyword>
<reference key="1">
    <citation type="journal article" date="1988" name="Proc. Natl. Acad. Sci. U.S.A.">
        <title>Complete amino acid sequence of human placental protein 14: a progesterone-regulated uterine protein homologous to beta-lactoglobulins.</title>
        <authorList>
            <person name="Julkunen M."/>
            <person name="Seppala M."/>
            <person name="Janne O.A."/>
        </authorList>
    </citation>
    <scope>NUCLEOTIDE SEQUENCE [MRNA]</scope>
</reference>
<reference key="2">
    <citation type="journal article" date="1990" name="DNA Cell Biol.">
        <title>Human placental protein 14 gene: sequence and characterization of a short duplication.</title>
        <authorList>
            <person name="Vaisse C."/>
            <person name="Atger M."/>
            <person name="Potier B."/>
            <person name="Milgrom E."/>
        </authorList>
    </citation>
    <scope>NUCLEOTIDE SEQUENCE [GENOMIC DNA]</scope>
</reference>
<reference key="3">
    <citation type="journal article" date="1991" name="Proc. Natl. Acad. Sci. U.S.A.">
        <title>Multiple forms of mRNA encoding human pregnancy-associated endometrial alpha 2-globulin, a beta-lactoglobulin homologue.</title>
        <authorList>
            <person name="Garde J."/>
            <person name="Bell S.C."/>
            <person name="Eperon I.C."/>
        </authorList>
    </citation>
    <scope>NUCLEOTIDE SEQUENCE [MRNA]</scope>
    <scope>ALTERNATIVE SPLICING</scope>
</reference>
<reference key="4">
    <citation type="journal article" date="2007" name="BMC Genomics">
        <title>The full-ORF clone resource of the German cDNA consortium.</title>
        <authorList>
            <person name="Bechtel S."/>
            <person name="Rosenfelder H."/>
            <person name="Duda A."/>
            <person name="Schmidt C.P."/>
            <person name="Ernst U."/>
            <person name="Wellenreuther R."/>
            <person name="Mehrle A."/>
            <person name="Schuster C."/>
            <person name="Bahr A."/>
            <person name="Bloecker H."/>
            <person name="Heubner D."/>
            <person name="Hoerlein A."/>
            <person name="Michel G."/>
            <person name="Wedler H."/>
            <person name="Koehrer K."/>
            <person name="Ottenwaelder B."/>
            <person name="Poustka A."/>
            <person name="Wiemann S."/>
            <person name="Schupp I."/>
        </authorList>
    </citation>
    <scope>NUCLEOTIDE SEQUENCE [LARGE SCALE MRNA]</scope>
    <source>
        <tissue>Uterus</tissue>
    </source>
</reference>
<reference key="5">
    <citation type="journal article" date="2004" name="Nature">
        <title>DNA sequence and analysis of human chromosome 9.</title>
        <authorList>
            <person name="Humphray S.J."/>
            <person name="Oliver K."/>
            <person name="Hunt A.R."/>
            <person name="Plumb R.W."/>
            <person name="Loveland J.E."/>
            <person name="Howe K.L."/>
            <person name="Andrews T.D."/>
            <person name="Searle S."/>
            <person name="Hunt S.E."/>
            <person name="Scott C.E."/>
            <person name="Jones M.C."/>
            <person name="Ainscough R."/>
            <person name="Almeida J.P."/>
            <person name="Ambrose K.D."/>
            <person name="Ashwell R.I.S."/>
            <person name="Babbage A.K."/>
            <person name="Babbage S."/>
            <person name="Bagguley C.L."/>
            <person name="Bailey J."/>
            <person name="Banerjee R."/>
            <person name="Barker D.J."/>
            <person name="Barlow K.F."/>
            <person name="Bates K."/>
            <person name="Beasley H."/>
            <person name="Beasley O."/>
            <person name="Bird C.P."/>
            <person name="Bray-Allen S."/>
            <person name="Brown A.J."/>
            <person name="Brown J.Y."/>
            <person name="Burford D."/>
            <person name="Burrill W."/>
            <person name="Burton J."/>
            <person name="Carder C."/>
            <person name="Carter N.P."/>
            <person name="Chapman J.C."/>
            <person name="Chen Y."/>
            <person name="Clarke G."/>
            <person name="Clark S.Y."/>
            <person name="Clee C.M."/>
            <person name="Clegg S."/>
            <person name="Collier R.E."/>
            <person name="Corby N."/>
            <person name="Crosier M."/>
            <person name="Cummings A.T."/>
            <person name="Davies J."/>
            <person name="Dhami P."/>
            <person name="Dunn M."/>
            <person name="Dutta I."/>
            <person name="Dyer L.W."/>
            <person name="Earthrowl M.E."/>
            <person name="Faulkner L."/>
            <person name="Fleming C.J."/>
            <person name="Frankish A."/>
            <person name="Frankland J.A."/>
            <person name="French L."/>
            <person name="Fricker D.G."/>
            <person name="Garner P."/>
            <person name="Garnett J."/>
            <person name="Ghori J."/>
            <person name="Gilbert J.G.R."/>
            <person name="Glison C."/>
            <person name="Grafham D.V."/>
            <person name="Gribble S."/>
            <person name="Griffiths C."/>
            <person name="Griffiths-Jones S."/>
            <person name="Grocock R."/>
            <person name="Guy J."/>
            <person name="Hall R.E."/>
            <person name="Hammond S."/>
            <person name="Harley J.L."/>
            <person name="Harrison E.S.I."/>
            <person name="Hart E.A."/>
            <person name="Heath P.D."/>
            <person name="Henderson C.D."/>
            <person name="Hopkins B.L."/>
            <person name="Howard P.J."/>
            <person name="Howden P.J."/>
            <person name="Huckle E."/>
            <person name="Johnson C."/>
            <person name="Johnson D."/>
            <person name="Joy A.A."/>
            <person name="Kay M."/>
            <person name="Keenan S."/>
            <person name="Kershaw J.K."/>
            <person name="Kimberley A.M."/>
            <person name="King A."/>
            <person name="Knights A."/>
            <person name="Laird G.K."/>
            <person name="Langford C."/>
            <person name="Lawlor S."/>
            <person name="Leongamornlert D.A."/>
            <person name="Leversha M."/>
            <person name="Lloyd C."/>
            <person name="Lloyd D.M."/>
            <person name="Lovell J."/>
            <person name="Martin S."/>
            <person name="Mashreghi-Mohammadi M."/>
            <person name="Matthews L."/>
            <person name="McLaren S."/>
            <person name="McLay K.E."/>
            <person name="McMurray A."/>
            <person name="Milne S."/>
            <person name="Nickerson T."/>
            <person name="Nisbett J."/>
            <person name="Nordsiek G."/>
            <person name="Pearce A.V."/>
            <person name="Peck A.I."/>
            <person name="Porter K.M."/>
            <person name="Pandian R."/>
            <person name="Pelan S."/>
            <person name="Phillimore B."/>
            <person name="Povey S."/>
            <person name="Ramsey Y."/>
            <person name="Rand V."/>
            <person name="Scharfe M."/>
            <person name="Sehra H.K."/>
            <person name="Shownkeen R."/>
            <person name="Sims S.K."/>
            <person name="Skuce C.D."/>
            <person name="Smith M."/>
            <person name="Steward C.A."/>
            <person name="Swarbreck D."/>
            <person name="Sycamore N."/>
            <person name="Tester J."/>
            <person name="Thorpe A."/>
            <person name="Tracey A."/>
            <person name="Tromans A."/>
            <person name="Thomas D.W."/>
            <person name="Wall M."/>
            <person name="Wallis J.M."/>
            <person name="West A.P."/>
            <person name="Whitehead S.L."/>
            <person name="Willey D.L."/>
            <person name="Williams S.A."/>
            <person name="Wilming L."/>
            <person name="Wray P.W."/>
            <person name="Young L."/>
            <person name="Ashurst J.L."/>
            <person name="Coulson A."/>
            <person name="Blocker H."/>
            <person name="Durbin R.M."/>
            <person name="Sulston J.E."/>
            <person name="Hubbard T."/>
            <person name="Jackson M.J."/>
            <person name="Bentley D.R."/>
            <person name="Beck S."/>
            <person name="Rogers J."/>
            <person name="Dunham I."/>
        </authorList>
    </citation>
    <scope>NUCLEOTIDE SEQUENCE [LARGE SCALE GENOMIC DNA]</scope>
</reference>
<reference key="6">
    <citation type="journal article" date="2004" name="Genome Res.">
        <title>The status, quality, and expansion of the NIH full-length cDNA project: the Mammalian Gene Collection (MGC).</title>
        <authorList>
            <consortium name="The MGC Project Team"/>
        </authorList>
    </citation>
    <scope>NUCLEOTIDE SEQUENCE [LARGE SCALE MRNA] (ISOFORM 1)</scope>
    <source>
        <tissue>Lung</tissue>
    </source>
</reference>
<reference key="7">
    <citation type="journal article" date="1987" name="J. Clin. Endocrinol. Metab.">
        <title>Pregnancy-associated endometrial alpha 2-globulin, the major secretory protein of the luteal phase and first trimester pregnancy endometrium, is not glycosylated prolactin but related to beta-lactoglobulins.</title>
        <authorList>
            <person name="Bell S.C."/>
            <person name="Keyte J.W."/>
            <person name="Waites G.T."/>
        </authorList>
    </citation>
    <scope>PROTEIN SEQUENCE OF 19-56</scope>
    <scope>SUBCELLULAR LOCATION</scope>
    <scope>TISSUE SPECIFICITY</scope>
</reference>
<reference key="8">
    <citation type="journal article" date="1987" name="Endocrinology">
        <title>Amino acid sequence homology between human placental protein 14 and beta-lactoglobulins from various species.</title>
        <authorList>
            <person name="Huhtala M.L."/>
            <person name="Seppala M."/>
            <person name="Narvanen A."/>
            <person name="Palomaki P."/>
            <person name="Julkunen M."/>
            <person name="Bohn H."/>
        </authorList>
    </citation>
    <scope>PROTEIN SEQUENCE OF 19-30</scope>
</reference>
<reference key="9">
    <citation type="journal article" date="2001" name="J. Biol. Chem.">
        <title>Purification and characterization of an immunomodulatory endometrial protein, glycodelin.</title>
        <authorList>
            <person name="Vigne J.-L."/>
            <person name="Hornung D."/>
            <person name="Mueller M.D."/>
            <person name="Taylor R.N."/>
        </authorList>
    </citation>
    <scope>PROTEIN SEQUENCE OF 19-38</scope>
    <source>
        <tissue>Decidua</tissue>
    </source>
</reference>
<reference key="10">
    <citation type="journal article" date="2003" name="Biol. Reprod.">
        <title>Zona-binding inhibitory factor-1 from human follicular fluid is an isoform of glycodelin.</title>
        <authorList>
            <person name="Chiu P.C."/>
            <person name="Koistinen R."/>
            <person name="Koistinen H."/>
            <person name="Seppala M."/>
            <person name="Lee K.F."/>
            <person name="Yeung W.S."/>
        </authorList>
    </citation>
    <scope>PROTEIN SEQUENCE OF 19-43</scope>
    <scope>STRUCTURE OF CARBOHYRATES OF GLYCODELIN-F</scope>
    <scope>SUBCELLULAR LOCATION</scope>
    <scope>TISSUE SPECIFICITY</scope>
    <scope>FUNCTION</scope>
</reference>
<reference key="11">
    <citation type="journal article" date="1995" name="Fertil. Steril.">
        <title>Factors affecting fertilization: endometrial placental protein 14 reduces the capacity of human spermatozoa to bind to the human zona pellucida.</title>
        <authorList>
            <person name="Oehninger S."/>
            <person name="Coddington C.C."/>
            <person name="Hodgen G.D."/>
            <person name="Seppala M."/>
        </authorList>
    </citation>
    <scope>FUNCTION OF GLYCODELIN-A</scope>
</reference>
<reference key="12">
    <citation type="journal article" date="1995" name="J. Biol. Chem.">
        <title>Structural analysis of the oligosaccharides derived from glycodelin, a human glycoprotein with potent immunosuppressive and contraceptive activities.</title>
        <authorList>
            <person name="Dell A."/>
            <person name="Morris H.R."/>
            <person name="Easton R.L."/>
            <person name="Panico M."/>
            <person name="Patankar M."/>
            <person name="Oehniger S."/>
            <person name="Koistinen R."/>
            <person name="Koistinen H."/>
            <person name="Seppala M."/>
            <person name="Clark G.F."/>
        </authorList>
    </citation>
    <scope>STRUCTURE OF CARBOHYDRATES OF GLYCODELIN-A</scope>
    <scope>GLYCOSYLATION AT ASN-46 AND ASN-81</scope>
    <scope>IDENTIFICATION BY MASS SPECTROMETRY</scope>
    <source>
        <tissue>Amniotic fluid</tissue>
    </source>
</reference>
<reference key="13">
    <citation type="journal article" date="1996" name="J. Biol. Chem.">
        <title>Gender-specific glycosylation of human glycodelin affects its contraceptive activity.</title>
        <authorList>
            <person name="Morris H.R."/>
            <person name="Dell A."/>
            <person name="Easton R.L."/>
            <person name="Panico M."/>
            <person name="Koistinen H."/>
            <person name="Koistinen R."/>
            <person name="Oehninger S."/>
            <person name="Patankar M.S."/>
            <person name="Seppala M."/>
            <person name="Clark G.F."/>
        </authorList>
    </citation>
    <scope>STRUCTURE OF CARBOHYDRATES OF GLYCODELIN-S</scope>
    <source>
        <tissue>Seminal plasma</tissue>
    </source>
</reference>
<reference key="14">
    <citation type="journal article" date="1996" name="Mol. Hum. Reprod.">
        <title>Glycodelin from seminal plasma is a differentially glycosylated form of contraceptive glycodelin-A.</title>
        <authorList>
            <person name="Koistinen H."/>
            <person name="Koistinen R."/>
            <person name="Dell A."/>
            <person name="Morris H.R."/>
            <person name="Easton R.L."/>
            <person name="Patankar M.S."/>
            <person name="Oehninger S."/>
            <person name="Clark G.F."/>
            <person name="Seppala M."/>
        </authorList>
    </citation>
    <scope>STRUCTURE OF CARBOHYDRATES OF GLYCODELIN-S</scope>
    <scope>TISSUE SPECIFICITY</scope>
    <scope>SUBUNIT</scope>
</reference>
<reference key="15">
    <citation type="journal article" date="1999" name="Cell. Immunol.">
        <title>Placental protein 14 functions as a direct T-cell inhibitor.</title>
        <authorList>
            <person name="Rachmilewitz J."/>
            <person name="Riely G.J."/>
            <person name="Tykocinski M.L."/>
        </authorList>
    </citation>
    <scope>FUNCTION</scope>
</reference>
<reference key="16">
    <citation type="journal article" date="2005" name="J. Biol. Chem.">
        <title>Glycodelin-S in human seminal plasma reduces cholesterol efflux and inhibits capacitation of spermatozoa.</title>
        <authorList>
            <person name="Chiu P.C."/>
            <person name="Chung M.K."/>
            <person name="Tsang H.Y."/>
            <person name="Koistinen R."/>
            <person name="Koistinen H."/>
            <person name="Seppala M."/>
            <person name="Lee K.F."/>
            <person name="Yeung W.S."/>
        </authorList>
    </citation>
    <scope>FUNCTION OF GLYCODELIN-S</scope>
</reference>
<reference key="17">
    <citation type="journal article" date="2007" name="J. Biol. Chem.">
        <title>Cumulus oophorus-associated glycodelin-C displaces sperm-bound glycodelin-A and -F and stimulates spermatozoa-zona pellucida binding.</title>
        <authorList>
            <person name="Chiu P.C."/>
            <person name="Chung M.K."/>
            <person name="Koistinen R."/>
            <person name="Koistinen H."/>
            <person name="Seppala M."/>
            <person name="Ho P.C."/>
            <person name="Ng E.H."/>
            <person name="Lee K.F."/>
            <person name="Yeung W.S."/>
        </authorList>
    </citation>
    <scope>STRUCTURE OF CARBOHYDRATES OF GLYCODELIN-C</scope>
    <scope>FUNCTION</scope>
    <scope>TISSUE SPECIFICITY</scope>
    <scope>SUBCELLULAR LOCATION</scope>
</reference>
<reference evidence="19" key="18">
    <citation type="journal article" date="2015" name="Biochem. J.">
        <title>The dimeric crystal structure of the human fertility lipocalin glycodelin reveals a protein scaffold for the presentation of complex glycans.</title>
        <authorList>
            <person name="Schiefner A."/>
            <person name="Rodewald F."/>
            <person name="Neumaier I."/>
            <person name="Skerra A."/>
        </authorList>
    </citation>
    <scope>X-RAY CRYSTALLOGRAPHY (2.45 ANGSTROMS) OF 20-180</scope>
    <scope>DISULFIDE BONDS</scope>
    <scope>SUBUNIT</scope>
</reference>
<name>PAEP_HUMAN</name>
<organism>
    <name type="scientific">Homo sapiens</name>
    <name type="common">Human</name>
    <dbReference type="NCBI Taxonomy" id="9606"/>
    <lineage>
        <taxon>Eukaryota</taxon>
        <taxon>Metazoa</taxon>
        <taxon>Chordata</taxon>
        <taxon>Craniata</taxon>
        <taxon>Vertebrata</taxon>
        <taxon>Euteleostomi</taxon>
        <taxon>Mammalia</taxon>
        <taxon>Eutheria</taxon>
        <taxon>Euarchontoglires</taxon>
        <taxon>Primates</taxon>
        <taxon>Haplorrhini</taxon>
        <taxon>Catarrhini</taxon>
        <taxon>Hominidae</taxon>
        <taxon>Homo</taxon>
    </lineage>
</organism>
<feature type="signal peptide" evidence="1 7 8">
    <location>
        <begin position="1"/>
        <end position="18"/>
    </location>
</feature>
<feature type="chain" id="PRO_0000017953" description="Glycodelin">
    <location>
        <begin position="19"/>
        <end position="180"/>
    </location>
</feature>
<feature type="glycosylation site" id="CAR_000123" description="N-linked (GlcNAc...) (complex) asparagine" evidence="10">
    <location>
        <position position="46"/>
    </location>
</feature>
<feature type="glycosylation site" id="CAR_000124" description="N-linked (GlcNAc...) (complex) asparagine" evidence="10">
    <location>
        <position position="81"/>
    </location>
</feature>
<feature type="disulfide bond" evidence="5 19">
    <location>
        <begin position="84"/>
        <end position="178"/>
    </location>
</feature>
<feature type="disulfide bond" evidence="5 19">
    <location>
        <begin position="124"/>
        <end position="137"/>
    </location>
</feature>
<feature type="splice variant" id="VSP_003141" description="In isoform 3." evidence="18">
    <location>
        <begin position="33"/>
        <end position="126"/>
    </location>
</feature>
<feature type="splice variant" id="VSP_003140" description="In isoform 2." evidence="18">
    <location>
        <begin position="33"/>
        <end position="54"/>
    </location>
</feature>
<feature type="sequence variant" id="VAR_050178" description="In dbSNP:rs34284195.">
    <original>L</original>
    <variation>V</variation>
    <location>
        <position position="28"/>
    </location>
</feature>
<feature type="sequence variant" id="VAR_034355" description="In dbSNP:rs3748210.">
    <original>Q</original>
    <variation>K</variation>
    <location>
        <position position="126"/>
    </location>
</feature>
<feature type="sequence conflict" description="In Ref. 9; AA sequence." evidence="18" ref="9">
    <original>GTW</original>
    <variation>VTA</variation>
    <location>
        <begin position="35"/>
        <end position="37"/>
    </location>
</feature>
<feature type="sequence conflict" description="In Ref. 7; AA sequence." evidence="18" ref="7">
    <original>T</original>
    <variation>K</variation>
    <location>
        <position position="36"/>
    </location>
</feature>
<feature type="sequence conflict" description="In Ref. 1." evidence="18" ref="1">
    <original>E</original>
    <variation>G</variation>
    <location>
        <position position="95"/>
    </location>
</feature>
<feature type="sequence conflict" description="In Ref. 1." evidence="18" ref="1">
    <original>Q</original>
    <variation>E</variation>
    <location>
        <position position="152"/>
    </location>
</feature>
<feature type="helix" evidence="20">
    <location>
        <begin position="30"/>
        <end position="33"/>
    </location>
</feature>
<feature type="strand" evidence="20">
    <location>
        <begin position="38"/>
        <end position="46"/>
    </location>
</feature>
<feature type="helix" evidence="20">
    <location>
        <begin position="47"/>
        <end position="49"/>
    </location>
</feature>
<feature type="strand" evidence="20">
    <location>
        <begin position="60"/>
        <end position="66"/>
    </location>
</feature>
<feature type="strand" evidence="20">
    <location>
        <begin position="72"/>
        <end position="79"/>
    </location>
</feature>
<feature type="strand" evidence="20">
    <location>
        <begin position="81"/>
        <end position="93"/>
    </location>
</feature>
<feature type="strand" evidence="20">
    <location>
        <begin position="99"/>
        <end position="104"/>
    </location>
</feature>
<feature type="strand" evidence="20">
    <location>
        <begin position="107"/>
        <end position="115"/>
    </location>
</feature>
<feature type="strand" evidence="20">
    <location>
        <begin position="117"/>
        <end position="127"/>
    </location>
</feature>
<feature type="strand" evidence="20">
    <location>
        <begin position="129"/>
        <end position="132"/>
    </location>
</feature>
<feature type="strand" evidence="20">
    <location>
        <begin position="134"/>
        <end position="144"/>
    </location>
</feature>
<feature type="helix" evidence="20">
    <location>
        <begin position="148"/>
        <end position="158"/>
    </location>
</feature>
<feature type="strand" evidence="20">
    <location>
        <begin position="159"/>
        <end position="162"/>
    </location>
</feature>
<feature type="strand" evidence="20">
    <location>
        <begin position="167"/>
        <end position="170"/>
    </location>
</feature>
<feature type="turn" evidence="20">
    <location>
        <begin position="173"/>
        <end position="175"/>
    </location>
</feature>